<evidence type="ECO:0000250" key="1"/>
<evidence type="ECO:0000255" key="2"/>
<evidence type="ECO:0000305" key="3"/>
<organism>
    <name type="scientific">Staphylococcus aureus (strain bovine RF122 / ET3-1)</name>
    <dbReference type="NCBI Taxonomy" id="273036"/>
    <lineage>
        <taxon>Bacteria</taxon>
        <taxon>Bacillati</taxon>
        <taxon>Bacillota</taxon>
        <taxon>Bacilli</taxon>
        <taxon>Bacillales</taxon>
        <taxon>Staphylococcaceae</taxon>
        <taxon>Staphylococcus</taxon>
    </lineage>
</organism>
<dbReference type="EMBL" id="AJ938182">
    <property type="protein sequence ID" value="CAI80305.1"/>
    <property type="status" value="ALT_INIT"/>
    <property type="molecule type" value="Genomic_DNA"/>
</dbReference>
<dbReference type="RefSeq" id="WP_001090984.1">
    <property type="nucleotide sequence ID" value="NC_007622.1"/>
</dbReference>
<dbReference type="SMR" id="Q2YSR3"/>
<dbReference type="KEGG" id="sab:SAB0617"/>
<dbReference type="HOGENOM" id="CLU_166896_0_0_9"/>
<dbReference type="GO" id="GO:0005737">
    <property type="term" value="C:cytoplasm"/>
    <property type="evidence" value="ECO:0007669"/>
    <property type="project" value="UniProtKB-SubCell"/>
</dbReference>
<dbReference type="GO" id="GO:0003677">
    <property type="term" value="F:DNA binding"/>
    <property type="evidence" value="ECO:0007669"/>
    <property type="project" value="UniProtKB-KW"/>
</dbReference>
<dbReference type="GO" id="GO:0006355">
    <property type="term" value="P:regulation of DNA-templated transcription"/>
    <property type="evidence" value="ECO:0007669"/>
    <property type="project" value="InterPro"/>
</dbReference>
<dbReference type="Gene3D" id="1.10.10.10">
    <property type="entry name" value="Winged helix-like DNA-binding domain superfamily/Winged helix DNA-binding domain"/>
    <property type="match status" value="1"/>
</dbReference>
<dbReference type="InterPro" id="IPR010166">
    <property type="entry name" value="SarA/Rot_dom"/>
</dbReference>
<dbReference type="InterPro" id="IPR055166">
    <property type="entry name" value="Transc_reg_Sar_Rot_HTH"/>
</dbReference>
<dbReference type="InterPro" id="IPR036388">
    <property type="entry name" value="WH-like_DNA-bd_sf"/>
</dbReference>
<dbReference type="InterPro" id="IPR036390">
    <property type="entry name" value="WH_DNA-bd_sf"/>
</dbReference>
<dbReference type="NCBIfam" id="TIGR01889">
    <property type="entry name" value="Staph_reg_Sar"/>
    <property type="match status" value="1"/>
</dbReference>
<dbReference type="Pfam" id="PF22381">
    <property type="entry name" value="Staph_reg_Sar_Rot"/>
    <property type="match status" value="1"/>
</dbReference>
<dbReference type="SUPFAM" id="SSF46785">
    <property type="entry name" value="Winged helix' DNA-binding domain"/>
    <property type="match status" value="1"/>
</dbReference>
<comment type="function">
    <text evidence="1">Involved in the regulation of virulence genes. Acts as a repressor of the agr locus and consequently targets genes regulated by the agr system such as sspA, hla and hlb. Binds directly to the agr promoter region (By similarity).</text>
</comment>
<comment type="subcellular location">
    <subcellularLocation>
        <location evidence="1">Cytoplasm</location>
    </subcellularLocation>
</comment>
<comment type="similarity">
    <text evidence="3">Belongs to the SarA family.</text>
</comment>
<comment type="sequence caution" evidence="3">
    <conflict type="erroneous initiation">
        <sequence resource="EMBL-CDS" id="CAI80305"/>
    </conflict>
</comment>
<feature type="chain" id="PRO_0000259138" description="HTH-type transcriptional regulator SarX">
    <location>
        <begin position="1"/>
        <end position="119"/>
    </location>
</feature>
<feature type="DNA-binding region" description="H-T-H motif" evidence="2">
    <location>
        <begin position="55"/>
        <end position="78"/>
    </location>
</feature>
<proteinExistence type="inferred from homology"/>
<protein>
    <recommendedName>
        <fullName>HTH-type transcriptional regulator SarX</fullName>
    </recommendedName>
    <alternativeName>
        <fullName>Staphylococcal accessory regulator X</fullName>
    </alternativeName>
</protein>
<sequence length="119" mass="14180">MNTEKLETLLGFYKQYKALSEYIDKKYKLSLNDLAVLDLTMKHCKDEKVLMQSFLKTAMDELDLSRTKLLVSIRRLIEKERLSKVRSSKDERKIYIYLNDDDISKFNALFEDVEQFLNI</sequence>
<gene>
    <name type="primary">sarX</name>
    <name type="ordered locus">SAB0617</name>
</gene>
<accession>Q2YSR3</accession>
<name>SARX_STAAB</name>
<reference key="1">
    <citation type="journal article" date="2007" name="PLoS ONE">
        <title>Molecular correlates of host specialization in Staphylococcus aureus.</title>
        <authorList>
            <person name="Herron-Olson L."/>
            <person name="Fitzgerald J.R."/>
            <person name="Musser J.M."/>
            <person name="Kapur V."/>
        </authorList>
    </citation>
    <scope>NUCLEOTIDE SEQUENCE [LARGE SCALE GENOMIC DNA]</scope>
    <source>
        <strain>bovine RF122 / ET3-1</strain>
    </source>
</reference>
<keyword id="KW-0963">Cytoplasm</keyword>
<keyword id="KW-0238">DNA-binding</keyword>
<keyword id="KW-0678">Repressor</keyword>
<keyword id="KW-0804">Transcription</keyword>
<keyword id="KW-0805">Transcription regulation</keyword>
<keyword id="KW-0843">Virulence</keyword>